<comment type="function">
    <text evidence="1">Removes the 2'-phosphate from RNA via an intermediate in which the phosphate is ADP-ribosylated by NAD followed by a presumed transesterification to release the RNA and generate ADP-ribose 1''-2''-cyclic phosphate (APPR&gt;P). May function as an ADP-ribosylase.</text>
</comment>
<comment type="similarity">
    <text evidence="1">Belongs to the KptA/TPT1 family.</text>
</comment>
<evidence type="ECO:0000255" key="1">
    <source>
        <dbReference type="HAMAP-Rule" id="MF_00299"/>
    </source>
</evidence>
<dbReference type="EC" id="2.7.1.-" evidence="1"/>
<dbReference type="EMBL" id="CP000076">
    <property type="protein sequence ID" value="AAY95038.1"/>
    <property type="molecule type" value="Genomic_DNA"/>
</dbReference>
<dbReference type="RefSeq" id="WP_011064022.1">
    <property type="nucleotide sequence ID" value="NC_004129.6"/>
</dbReference>
<dbReference type="SMR" id="Q4K4C7"/>
<dbReference type="STRING" id="220664.PFL_5848"/>
<dbReference type="GeneID" id="57478803"/>
<dbReference type="KEGG" id="pfl:PFL_5848"/>
<dbReference type="PATRIC" id="fig|220664.5.peg.5962"/>
<dbReference type="eggNOG" id="COG1859">
    <property type="taxonomic scope" value="Bacteria"/>
</dbReference>
<dbReference type="HOGENOM" id="CLU_052998_4_0_6"/>
<dbReference type="Proteomes" id="UP000008540">
    <property type="component" value="Chromosome"/>
</dbReference>
<dbReference type="GO" id="GO:0003950">
    <property type="term" value="F:NAD+ poly-ADP-ribosyltransferase activity"/>
    <property type="evidence" value="ECO:0007669"/>
    <property type="project" value="InterPro"/>
</dbReference>
<dbReference type="GO" id="GO:0000215">
    <property type="term" value="F:tRNA 2'-phosphotransferase activity"/>
    <property type="evidence" value="ECO:0007669"/>
    <property type="project" value="TreeGrafter"/>
</dbReference>
<dbReference type="GO" id="GO:0006388">
    <property type="term" value="P:tRNA splicing, via endonucleolytic cleavage and ligation"/>
    <property type="evidence" value="ECO:0007669"/>
    <property type="project" value="UniProtKB-UniRule"/>
</dbReference>
<dbReference type="Gene3D" id="3.20.170.30">
    <property type="match status" value="1"/>
</dbReference>
<dbReference type="Gene3D" id="1.10.10.970">
    <property type="entry name" value="RNA 2'-phosphotransferase, Tpt1/KptA family, N-terminal domain"/>
    <property type="match status" value="1"/>
</dbReference>
<dbReference type="HAMAP" id="MF_00299">
    <property type="entry name" value="KptA"/>
    <property type="match status" value="1"/>
</dbReference>
<dbReference type="InterPro" id="IPR002745">
    <property type="entry name" value="Ptrans_KptA/Tpt1"/>
</dbReference>
<dbReference type="InterPro" id="IPR042081">
    <property type="entry name" value="RNA_2'-PTrans_C"/>
</dbReference>
<dbReference type="InterPro" id="IPR022928">
    <property type="entry name" value="RNA_2'-PTrans_KptA"/>
</dbReference>
<dbReference type="InterPro" id="IPR042080">
    <property type="entry name" value="RNA_2'-PTrans_N"/>
</dbReference>
<dbReference type="NCBIfam" id="NF002014">
    <property type="entry name" value="PRK00819.1-4"/>
    <property type="match status" value="1"/>
</dbReference>
<dbReference type="PANTHER" id="PTHR12684">
    <property type="entry name" value="PUTATIVE PHOSPHOTRANSFERASE"/>
    <property type="match status" value="1"/>
</dbReference>
<dbReference type="PANTHER" id="PTHR12684:SF2">
    <property type="entry name" value="TRNA 2'-PHOSPHOTRANSFERASE 1"/>
    <property type="match status" value="1"/>
</dbReference>
<dbReference type="Pfam" id="PF01885">
    <property type="entry name" value="PTS_2-RNA"/>
    <property type="match status" value="1"/>
</dbReference>
<dbReference type="SUPFAM" id="SSF56399">
    <property type="entry name" value="ADP-ribosylation"/>
    <property type="match status" value="1"/>
</dbReference>
<proteinExistence type="inferred from homology"/>
<reference key="1">
    <citation type="journal article" date="2005" name="Nat. Biotechnol.">
        <title>Complete genome sequence of the plant commensal Pseudomonas fluorescens Pf-5.</title>
        <authorList>
            <person name="Paulsen I.T."/>
            <person name="Press C.M."/>
            <person name="Ravel J."/>
            <person name="Kobayashi D.Y."/>
            <person name="Myers G.S.A."/>
            <person name="Mavrodi D.V."/>
            <person name="DeBoy R.T."/>
            <person name="Seshadri R."/>
            <person name="Ren Q."/>
            <person name="Madupu R."/>
            <person name="Dodson R.J."/>
            <person name="Durkin A.S."/>
            <person name="Brinkac L.M."/>
            <person name="Daugherty S.C."/>
            <person name="Sullivan S.A."/>
            <person name="Rosovitz M.J."/>
            <person name="Gwinn M.L."/>
            <person name="Zhou L."/>
            <person name="Schneider D.J."/>
            <person name="Cartinhour S.W."/>
            <person name="Nelson W.C."/>
            <person name="Weidman J."/>
            <person name="Watkins K."/>
            <person name="Tran K."/>
            <person name="Khouri H."/>
            <person name="Pierson E.A."/>
            <person name="Pierson L.S. III"/>
            <person name="Thomashow L.S."/>
            <person name="Loper J.E."/>
        </authorList>
    </citation>
    <scope>NUCLEOTIDE SEQUENCE [LARGE SCALE GENOMIC DNA]</scope>
    <source>
        <strain>ATCC BAA-477 / NRRL B-23932 / Pf-5</strain>
    </source>
</reference>
<accession>Q4K4C7</accession>
<keyword id="KW-0520">NAD</keyword>
<keyword id="KW-0808">Transferase</keyword>
<protein>
    <recommendedName>
        <fullName evidence="1">Probable RNA 2'-phosphotransferase</fullName>
        <ecNumber evidence="1">2.7.1.-</ecNumber>
    </recommendedName>
</protein>
<gene>
    <name evidence="1" type="primary">kptA</name>
    <name type="ordered locus">PFL_5848</name>
</gene>
<sequence length="182" mass="20132">MSKKVIEDTSKFLSYVLRHEPQAIGLELDSEGWGDIDALISGAAKNGRQLSRELIELVVEGNDKKRFALSADSRRIRAVQGHSNKAVQLQLEAKQPPAVLFHGTATRFMDSINEKGLIPGSRHHVHLSQEIDTARAVGQRYGKVVILQIDAQAMQAQGFTFYQAENGVWLTDQVPVGFIKAL</sequence>
<organism>
    <name type="scientific">Pseudomonas fluorescens (strain ATCC BAA-477 / NRRL B-23932 / Pf-5)</name>
    <dbReference type="NCBI Taxonomy" id="220664"/>
    <lineage>
        <taxon>Bacteria</taxon>
        <taxon>Pseudomonadati</taxon>
        <taxon>Pseudomonadota</taxon>
        <taxon>Gammaproteobacteria</taxon>
        <taxon>Pseudomonadales</taxon>
        <taxon>Pseudomonadaceae</taxon>
        <taxon>Pseudomonas</taxon>
    </lineage>
</organism>
<feature type="chain" id="PRO_0000231955" description="Probable RNA 2'-phosphotransferase">
    <location>
        <begin position="1"/>
        <end position="182"/>
    </location>
</feature>
<name>KPTA_PSEF5</name>